<sequence>MVNMDRENDHGEPEHVRKLFIGGLDYRTTDESLKQHFEQWGEIVDVVVMKDPKTKRSRGFGFITYSRAHMVDDAQNARPHKVDGRVVEPKRAVPRTEIGRPEAGATVKKLFVGGIKEEMEENDLRDYFKQYGTVVSAAIVVDKETRKKRGFAFVEFDDYDPVDKICLSRNHQIRGKHIDVKKALPKGDAPGGRGGGGRGGVGGGAGGGWGGGRGDWGGSAGGGGGGGWGGADPWENGRGGGGDRWGGGGGGMGGGDRWGGGGGMGGGDRYGGGGGRSGGWSNDGYNSGPQSDGFGGGYKQSYGGGAVRGSSGYGGSRSAPYSDRGSRGGGGGGYGSGGGRRY</sequence>
<evidence type="ECO:0000250" key="1"/>
<evidence type="ECO:0000255" key="2">
    <source>
        <dbReference type="PROSITE-ProRule" id="PRU00176"/>
    </source>
</evidence>
<evidence type="ECO:0000256" key="3">
    <source>
        <dbReference type="SAM" id="MobiDB-lite"/>
    </source>
</evidence>
<evidence type="ECO:0000269" key="4">
    <source>
    </source>
</evidence>
<comment type="function">
    <text>This protein is a component of ribonucleosomes.</text>
</comment>
<comment type="subcellular location">
    <subcellularLocation>
        <location evidence="1">Nucleus</location>
    </subcellularLocation>
</comment>
<comment type="developmental stage">
    <text evidence="4">Abundant in embryos younger than 50% of embryonic development.</text>
</comment>
<accession>P21522</accession>
<proteinExistence type="evidence at transcript level"/>
<feature type="chain" id="PRO_0000081835" description="Heterogeneous nuclear ribonucleoprotein A1, A2/B1 homolog">
    <location>
        <begin position="1"/>
        <end position="342"/>
    </location>
</feature>
<feature type="domain" description="RRM 1" evidence="2">
    <location>
        <begin position="17"/>
        <end position="93"/>
    </location>
</feature>
<feature type="domain" description="RRM 2" evidence="2">
    <location>
        <begin position="108"/>
        <end position="185"/>
    </location>
</feature>
<feature type="region of interest" description="Disordered" evidence="3">
    <location>
        <begin position="180"/>
        <end position="342"/>
    </location>
</feature>
<feature type="compositionally biased region" description="Gly residues" evidence="3">
    <location>
        <begin position="189"/>
        <end position="230"/>
    </location>
</feature>
<feature type="compositionally biased region" description="Gly residues" evidence="3">
    <location>
        <begin position="237"/>
        <end position="278"/>
    </location>
</feature>
<feature type="compositionally biased region" description="Gly residues" evidence="3">
    <location>
        <begin position="293"/>
        <end position="315"/>
    </location>
</feature>
<feature type="compositionally biased region" description="Gly residues" evidence="3">
    <location>
        <begin position="327"/>
        <end position="342"/>
    </location>
</feature>
<reference key="1">
    <citation type="journal article" date="1991" name="Nucleic Acids Res.">
        <title>Cloning of a grasshopper cDNA coding for a protein homologous to the A1, A2/B1 proteins of mammalian hnRNP.</title>
        <authorList>
            <person name="Ball E.E."/>
            <person name="Rehm E.J."/>
            <person name="Goodman C.S."/>
        </authorList>
    </citation>
    <scope>NUCLEOTIDE SEQUENCE [MRNA]</scope>
    <scope>DEVELOPMENTAL STAGE</scope>
</reference>
<protein>
    <recommendedName>
        <fullName>Heterogeneous nuclear ribonucleoprotein A1, A2/B1 homolog</fullName>
    </recommendedName>
</protein>
<keyword id="KW-0539">Nucleus</keyword>
<keyword id="KW-0677">Repeat</keyword>
<keyword id="KW-0687">Ribonucleoprotein</keyword>
<keyword id="KW-0694">RNA-binding</keyword>
<gene>
    <name type="primary">HNRNP</name>
</gene>
<organism>
    <name type="scientific">Schistocerca americana</name>
    <name type="common">American grasshopper</name>
    <dbReference type="NCBI Taxonomy" id="7009"/>
    <lineage>
        <taxon>Eukaryota</taxon>
        <taxon>Metazoa</taxon>
        <taxon>Ecdysozoa</taxon>
        <taxon>Arthropoda</taxon>
        <taxon>Hexapoda</taxon>
        <taxon>Insecta</taxon>
        <taxon>Pterygota</taxon>
        <taxon>Neoptera</taxon>
        <taxon>Polyneoptera</taxon>
        <taxon>Orthoptera</taxon>
        <taxon>Caelifera</taxon>
        <taxon>Acrididea</taxon>
        <taxon>Acridomorpha</taxon>
        <taxon>Acridoidea</taxon>
        <taxon>Acrididae</taxon>
        <taxon>Cyrtacanthacridinae</taxon>
        <taxon>Schistocerca</taxon>
    </lineage>
</organism>
<dbReference type="EMBL" id="X54670">
    <property type="protein sequence ID" value="CAA38481.1"/>
    <property type="molecule type" value="mRNA"/>
</dbReference>
<dbReference type="PIR" id="S14432">
    <property type="entry name" value="S14432"/>
</dbReference>
<dbReference type="SMR" id="P21522"/>
<dbReference type="EnsemblMetazoa" id="XM_047126777.1">
    <property type="protein sequence ID" value="XP_046982733.1"/>
    <property type="gene ID" value="LOC124552493"/>
</dbReference>
<dbReference type="OrthoDB" id="1875751at2759"/>
<dbReference type="GO" id="GO:0071013">
    <property type="term" value="C:catalytic step 2 spliceosome"/>
    <property type="evidence" value="ECO:0007669"/>
    <property type="project" value="TreeGrafter"/>
</dbReference>
<dbReference type="GO" id="GO:0003730">
    <property type="term" value="F:mRNA 3'-UTR binding"/>
    <property type="evidence" value="ECO:0007669"/>
    <property type="project" value="TreeGrafter"/>
</dbReference>
<dbReference type="GO" id="GO:0000398">
    <property type="term" value="P:mRNA splicing, via spliceosome"/>
    <property type="evidence" value="ECO:0007669"/>
    <property type="project" value="TreeGrafter"/>
</dbReference>
<dbReference type="CDD" id="cd12578">
    <property type="entry name" value="RRM1_hnRNPA_like"/>
    <property type="match status" value="1"/>
</dbReference>
<dbReference type="CDD" id="cd12328">
    <property type="entry name" value="RRM2_hnRNPA_like"/>
    <property type="match status" value="1"/>
</dbReference>
<dbReference type="FunFam" id="3.30.70.330:FF:000040">
    <property type="entry name" value="Heterogeneous nuclear ribonucleoprotein A2/B1"/>
    <property type="match status" value="1"/>
</dbReference>
<dbReference type="Gene3D" id="3.30.70.330">
    <property type="match status" value="2"/>
</dbReference>
<dbReference type="InterPro" id="IPR012677">
    <property type="entry name" value="Nucleotide-bd_a/b_plait_sf"/>
</dbReference>
<dbReference type="InterPro" id="IPR035979">
    <property type="entry name" value="RBD_domain_sf"/>
</dbReference>
<dbReference type="InterPro" id="IPR000504">
    <property type="entry name" value="RRM_dom"/>
</dbReference>
<dbReference type="PANTHER" id="PTHR48026:SF14">
    <property type="entry name" value="HETEROGENEOUS NUCLEAR RIBONUCLEOPROTEIN A1"/>
    <property type="match status" value="1"/>
</dbReference>
<dbReference type="PANTHER" id="PTHR48026">
    <property type="entry name" value="HOMOLOGOUS TO DROSOPHILA SQD (SQUID) PROTEIN"/>
    <property type="match status" value="1"/>
</dbReference>
<dbReference type="Pfam" id="PF00076">
    <property type="entry name" value="RRM_1"/>
    <property type="match status" value="2"/>
</dbReference>
<dbReference type="SMART" id="SM00360">
    <property type="entry name" value="RRM"/>
    <property type="match status" value="2"/>
</dbReference>
<dbReference type="SUPFAM" id="SSF54928">
    <property type="entry name" value="RNA-binding domain, RBD"/>
    <property type="match status" value="2"/>
</dbReference>
<dbReference type="PROSITE" id="PS50102">
    <property type="entry name" value="RRM"/>
    <property type="match status" value="2"/>
</dbReference>
<name>ROA1_SCHAM</name>